<dbReference type="EC" id="2.7.2.3" evidence="1"/>
<dbReference type="EMBL" id="CP001048">
    <property type="protein sequence ID" value="ACC90283.1"/>
    <property type="molecule type" value="Genomic_DNA"/>
</dbReference>
<dbReference type="RefSeq" id="WP_002209963.1">
    <property type="nucleotide sequence ID" value="NZ_CP009780.1"/>
</dbReference>
<dbReference type="SMR" id="B2K0S0"/>
<dbReference type="GeneID" id="57973719"/>
<dbReference type="KEGG" id="ypb:YPTS_3328"/>
<dbReference type="PATRIC" id="fig|502801.10.peg.2768"/>
<dbReference type="UniPathway" id="UPA00109">
    <property type="reaction ID" value="UER00185"/>
</dbReference>
<dbReference type="GO" id="GO:0005829">
    <property type="term" value="C:cytosol"/>
    <property type="evidence" value="ECO:0007669"/>
    <property type="project" value="TreeGrafter"/>
</dbReference>
<dbReference type="GO" id="GO:0043531">
    <property type="term" value="F:ADP binding"/>
    <property type="evidence" value="ECO:0007669"/>
    <property type="project" value="TreeGrafter"/>
</dbReference>
<dbReference type="GO" id="GO:0005524">
    <property type="term" value="F:ATP binding"/>
    <property type="evidence" value="ECO:0007669"/>
    <property type="project" value="UniProtKB-KW"/>
</dbReference>
<dbReference type="GO" id="GO:0004618">
    <property type="term" value="F:phosphoglycerate kinase activity"/>
    <property type="evidence" value="ECO:0007669"/>
    <property type="project" value="UniProtKB-UniRule"/>
</dbReference>
<dbReference type="GO" id="GO:0006094">
    <property type="term" value="P:gluconeogenesis"/>
    <property type="evidence" value="ECO:0007669"/>
    <property type="project" value="TreeGrafter"/>
</dbReference>
<dbReference type="GO" id="GO:0006096">
    <property type="term" value="P:glycolytic process"/>
    <property type="evidence" value="ECO:0007669"/>
    <property type="project" value="UniProtKB-UniRule"/>
</dbReference>
<dbReference type="FunFam" id="3.40.50.1260:FF:000001">
    <property type="entry name" value="Phosphoglycerate kinase"/>
    <property type="match status" value="1"/>
</dbReference>
<dbReference type="FunFam" id="3.40.50.1260:FF:000002">
    <property type="entry name" value="Phosphoglycerate kinase"/>
    <property type="match status" value="1"/>
</dbReference>
<dbReference type="Gene3D" id="3.40.50.1260">
    <property type="entry name" value="Phosphoglycerate kinase, N-terminal domain"/>
    <property type="match status" value="2"/>
</dbReference>
<dbReference type="HAMAP" id="MF_00145">
    <property type="entry name" value="Phosphoglyc_kinase"/>
    <property type="match status" value="1"/>
</dbReference>
<dbReference type="InterPro" id="IPR001576">
    <property type="entry name" value="Phosphoglycerate_kinase"/>
</dbReference>
<dbReference type="InterPro" id="IPR015911">
    <property type="entry name" value="Phosphoglycerate_kinase_CS"/>
</dbReference>
<dbReference type="InterPro" id="IPR015824">
    <property type="entry name" value="Phosphoglycerate_kinase_N"/>
</dbReference>
<dbReference type="InterPro" id="IPR036043">
    <property type="entry name" value="Phosphoglycerate_kinase_sf"/>
</dbReference>
<dbReference type="PANTHER" id="PTHR11406">
    <property type="entry name" value="PHOSPHOGLYCERATE KINASE"/>
    <property type="match status" value="1"/>
</dbReference>
<dbReference type="PANTHER" id="PTHR11406:SF23">
    <property type="entry name" value="PHOSPHOGLYCERATE KINASE 1, CHLOROPLASTIC-RELATED"/>
    <property type="match status" value="1"/>
</dbReference>
<dbReference type="Pfam" id="PF00162">
    <property type="entry name" value="PGK"/>
    <property type="match status" value="1"/>
</dbReference>
<dbReference type="PIRSF" id="PIRSF000724">
    <property type="entry name" value="Pgk"/>
    <property type="match status" value="1"/>
</dbReference>
<dbReference type="PRINTS" id="PR00477">
    <property type="entry name" value="PHGLYCKINASE"/>
</dbReference>
<dbReference type="SUPFAM" id="SSF53748">
    <property type="entry name" value="Phosphoglycerate kinase"/>
    <property type="match status" value="1"/>
</dbReference>
<dbReference type="PROSITE" id="PS00111">
    <property type="entry name" value="PGLYCERATE_KINASE"/>
    <property type="match status" value="1"/>
</dbReference>
<protein>
    <recommendedName>
        <fullName evidence="1">Phosphoglycerate kinase</fullName>
        <ecNumber evidence="1">2.7.2.3</ecNumber>
    </recommendedName>
</protein>
<keyword id="KW-0067">ATP-binding</keyword>
<keyword id="KW-0963">Cytoplasm</keyword>
<keyword id="KW-0324">Glycolysis</keyword>
<keyword id="KW-0418">Kinase</keyword>
<keyword id="KW-0547">Nucleotide-binding</keyword>
<keyword id="KW-0808">Transferase</keyword>
<evidence type="ECO:0000255" key="1">
    <source>
        <dbReference type="HAMAP-Rule" id="MF_00145"/>
    </source>
</evidence>
<name>PGK_YERPB</name>
<accession>B2K0S0</accession>
<sequence>MSVIKMTDLDLAGKRVLIRADLNVPVKEGKVTSDARIRASLPTIEAALKQGAKVMVTSHLGRPTEGEYNEEFSLLPVVNYLKEKLSSPVRLAKDYLDGVEIAAGELVVLENVRFNKGEKKDDEALSKKYAALCDVYVMDAFGTAHRAQASTHGVGKFAPIACAGPLLSAELEALGKALGNPARPMVAIVGGSKVSTKLTVLGALSKIADKLIVGGGIANTFVAAQGHNVGKSLYEADLIPEAKRLLETCDIPVPTDVRVATEFSETAAATLKPANEIKDDEQILDLGDESAERLAEILKNAKTILWNGPVGVFEFPNFRKGTEIVARAIAESEAFSIAGGGDTLAAIDLFGIADQISYISTGGGAFLEFVEGKKLPAVVMLEERAKQ</sequence>
<proteinExistence type="inferred from homology"/>
<comment type="catalytic activity">
    <reaction evidence="1">
        <text>(2R)-3-phosphoglycerate + ATP = (2R)-3-phospho-glyceroyl phosphate + ADP</text>
        <dbReference type="Rhea" id="RHEA:14801"/>
        <dbReference type="ChEBI" id="CHEBI:30616"/>
        <dbReference type="ChEBI" id="CHEBI:57604"/>
        <dbReference type="ChEBI" id="CHEBI:58272"/>
        <dbReference type="ChEBI" id="CHEBI:456216"/>
        <dbReference type="EC" id="2.7.2.3"/>
    </reaction>
</comment>
<comment type="pathway">
    <text evidence="1">Carbohydrate degradation; glycolysis; pyruvate from D-glyceraldehyde 3-phosphate: step 2/5.</text>
</comment>
<comment type="subunit">
    <text evidence="1">Monomer.</text>
</comment>
<comment type="subcellular location">
    <subcellularLocation>
        <location evidence="1">Cytoplasm</location>
    </subcellularLocation>
</comment>
<comment type="similarity">
    <text evidence="1">Belongs to the phosphoglycerate kinase family.</text>
</comment>
<organism>
    <name type="scientific">Yersinia pseudotuberculosis serotype IB (strain PB1/+)</name>
    <dbReference type="NCBI Taxonomy" id="502801"/>
    <lineage>
        <taxon>Bacteria</taxon>
        <taxon>Pseudomonadati</taxon>
        <taxon>Pseudomonadota</taxon>
        <taxon>Gammaproteobacteria</taxon>
        <taxon>Enterobacterales</taxon>
        <taxon>Yersiniaceae</taxon>
        <taxon>Yersinia</taxon>
    </lineage>
</organism>
<feature type="chain" id="PRO_1000096395" description="Phosphoglycerate kinase">
    <location>
        <begin position="1"/>
        <end position="387"/>
    </location>
</feature>
<feature type="binding site" evidence="1">
    <location>
        <begin position="21"/>
        <end position="23"/>
    </location>
    <ligand>
        <name>substrate</name>
    </ligand>
</feature>
<feature type="binding site" evidence="1">
    <location>
        <position position="36"/>
    </location>
    <ligand>
        <name>substrate</name>
    </ligand>
</feature>
<feature type="binding site" evidence="1">
    <location>
        <begin position="59"/>
        <end position="62"/>
    </location>
    <ligand>
        <name>substrate</name>
    </ligand>
</feature>
<feature type="binding site" evidence="1">
    <location>
        <position position="113"/>
    </location>
    <ligand>
        <name>substrate</name>
    </ligand>
</feature>
<feature type="binding site" evidence="1">
    <location>
        <position position="146"/>
    </location>
    <ligand>
        <name>substrate</name>
    </ligand>
</feature>
<feature type="binding site" evidence="1">
    <location>
        <position position="197"/>
    </location>
    <ligand>
        <name>ATP</name>
        <dbReference type="ChEBI" id="CHEBI:30616"/>
    </ligand>
</feature>
<feature type="binding site" evidence="1">
    <location>
        <position position="314"/>
    </location>
    <ligand>
        <name>ATP</name>
        <dbReference type="ChEBI" id="CHEBI:30616"/>
    </ligand>
</feature>
<feature type="binding site" evidence="1">
    <location>
        <begin position="340"/>
        <end position="343"/>
    </location>
    <ligand>
        <name>ATP</name>
        <dbReference type="ChEBI" id="CHEBI:30616"/>
    </ligand>
</feature>
<gene>
    <name evidence="1" type="primary">pgk</name>
    <name type="ordered locus">YPTS_3328</name>
</gene>
<reference key="1">
    <citation type="submission" date="2008-04" db="EMBL/GenBank/DDBJ databases">
        <title>Complete sequence of Yersinia pseudotuberculosis PB1/+.</title>
        <authorList>
            <person name="Copeland A."/>
            <person name="Lucas S."/>
            <person name="Lapidus A."/>
            <person name="Glavina del Rio T."/>
            <person name="Dalin E."/>
            <person name="Tice H."/>
            <person name="Bruce D."/>
            <person name="Goodwin L."/>
            <person name="Pitluck S."/>
            <person name="Munk A.C."/>
            <person name="Brettin T."/>
            <person name="Detter J.C."/>
            <person name="Han C."/>
            <person name="Tapia R."/>
            <person name="Schmutz J."/>
            <person name="Larimer F."/>
            <person name="Land M."/>
            <person name="Hauser L."/>
            <person name="Challacombe J.F."/>
            <person name="Green L."/>
            <person name="Lindler L.E."/>
            <person name="Nikolich M.P."/>
            <person name="Richardson P."/>
        </authorList>
    </citation>
    <scope>NUCLEOTIDE SEQUENCE [LARGE SCALE GENOMIC DNA]</scope>
    <source>
        <strain>PB1/+</strain>
    </source>
</reference>